<name>PECK2_ENTH1</name>
<comment type="function">
    <text evidence="2">Inorganic pyrophosphate (PPi)-dependent phosphoenolpyruvate carboxykinase, which regulates the carbon flow of the central metabolism by fixing CO(2) to phosphoenolpyruvate to produce oxaloacetate. Can also produce pyruvate and diphosphate from phosphoenolpyruvate and phosphate.</text>
</comment>
<comment type="catalytic activity">
    <reaction evidence="2">
        <text>oxaloacetate + diphosphate = phosphoenolpyruvate + phosphate + CO2</text>
        <dbReference type="Rhea" id="RHEA:22356"/>
        <dbReference type="ChEBI" id="CHEBI:16452"/>
        <dbReference type="ChEBI" id="CHEBI:16526"/>
        <dbReference type="ChEBI" id="CHEBI:33019"/>
        <dbReference type="ChEBI" id="CHEBI:43474"/>
        <dbReference type="ChEBI" id="CHEBI:58702"/>
        <dbReference type="EC" id="4.1.1.38"/>
    </reaction>
</comment>
<comment type="subunit">
    <text evidence="2">Monomer and trimer; forms heterotrimers with PEPCK1 and PEPCK3.</text>
</comment>
<comment type="subcellular location">
    <subcellularLocation>
        <location evidence="2">Cytoplasm</location>
        <location evidence="2">Cytosol</location>
    </subcellularLocation>
</comment>
<comment type="similarity">
    <text evidence="4">Belongs to the PPi-type phosphoenolpyruvate carboxykinase family.</text>
</comment>
<keyword id="KW-0175">Coiled coil</keyword>
<keyword id="KW-0963">Cytoplasm</keyword>
<keyword id="KW-0210">Decarboxylase</keyword>
<keyword id="KW-0456">Lyase</keyword>
<keyword id="KW-1185">Reference proteome</keyword>
<evidence type="ECO:0000255" key="1"/>
<evidence type="ECO:0000269" key="2">
    <source>
    </source>
</evidence>
<evidence type="ECO:0000303" key="3">
    <source>
    </source>
</evidence>
<evidence type="ECO:0000305" key="4"/>
<evidence type="ECO:0000312" key="5">
    <source>
        <dbReference type="EMBL" id="EAL45476.1"/>
    </source>
</evidence>
<feature type="chain" id="PRO_0000434731" description="PPi-type phosphoenolpyruvate carboxykinase 2">
    <location>
        <begin position="1"/>
        <end position="1153"/>
    </location>
</feature>
<feature type="coiled-coil region" evidence="1">
    <location>
        <begin position="1085"/>
        <end position="1131"/>
    </location>
</feature>
<dbReference type="EC" id="4.1.1.38" evidence="2"/>
<dbReference type="EMBL" id="DS571208">
    <property type="protein sequence ID" value="EAL45476.1"/>
    <property type="molecule type" value="Genomic_DNA"/>
</dbReference>
<dbReference type="RefSeq" id="XP_650862.1">
    <property type="nucleotide sequence ID" value="XM_645770.2"/>
</dbReference>
<dbReference type="SMR" id="C4M1E4"/>
<dbReference type="STRING" id="5759.C4M1E4"/>
<dbReference type="EnsemblProtists" id="rna_EHI_030750-1">
    <property type="protein sequence ID" value="rna_EHI_030750-1"/>
    <property type="gene ID" value="EHI_030750"/>
</dbReference>
<dbReference type="GeneID" id="3405164"/>
<dbReference type="KEGG" id="ehi:EHI_030750"/>
<dbReference type="VEuPathDB" id="AmoebaDB:EHI5A_126350"/>
<dbReference type="VEuPathDB" id="AmoebaDB:EHI5A_194890"/>
<dbReference type="VEuPathDB" id="AmoebaDB:EHI5A_252600"/>
<dbReference type="VEuPathDB" id="AmoebaDB:EHI_030750"/>
<dbReference type="VEuPathDB" id="AmoebaDB:KM1_081510"/>
<dbReference type="VEuPathDB" id="AmoebaDB:KM1_309960"/>
<dbReference type="eggNOG" id="ENOG502QW6Z">
    <property type="taxonomic scope" value="Eukaryota"/>
</dbReference>
<dbReference type="HOGENOM" id="CLU_275663_0_0_1"/>
<dbReference type="InParanoid" id="C4M1E4"/>
<dbReference type="OMA" id="MIVARPR"/>
<dbReference type="OrthoDB" id="10248819at2759"/>
<dbReference type="BRENDA" id="4.1.1.38">
    <property type="organism ID" value="2080"/>
</dbReference>
<dbReference type="Proteomes" id="UP000001926">
    <property type="component" value="Partially assembled WGS sequence"/>
</dbReference>
<dbReference type="GO" id="GO:0005829">
    <property type="term" value="C:cytosol"/>
    <property type="evidence" value="ECO:0000314"/>
    <property type="project" value="UniProtKB"/>
</dbReference>
<dbReference type="GO" id="GO:0030585">
    <property type="term" value="F:phosphoenolpyruvate carboxykinase (diphosphate) activity"/>
    <property type="evidence" value="ECO:0000314"/>
    <property type="project" value="UniProtKB"/>
</dbReference>
<dbReference type="GO" id="GO:0070208">
    <property type="term" value="P:protein heterotrimerization"/>
    <property type="evidence" value="ECO:0000314"/>
    <property type="project" value="UniProtKB"/>
</dbReference>
<accession>C4M1E4</accession>
<proteinExistence type="evidence at protein level"/>
<organism>
    <name type="scientific">Entamoeba histolytica (strain ATCC 30459 / HM-1:IMSS / ABRM)</name>
    <dbReference type="NCBI Taxonomy" id="294381"/>
    <lineage>
        <taxon>Eukaryota</taxon>
        <taxon>Amoebozoa</taxon>
        <taxon>Evosea</taxon>
        <taxon>Archamoebae</taxon>
        <taxon>Mastigamoebida</taxon>
        <taxon>Entamoebidae</taxon>
        <taxon>Entamoeba</taxon>
    </lineage>
</organism>
<sequence>MFNQEQGTDYPVLNKKKLESLANLKLAMGGHEYPTDDLTQQGLKLAGPLLEEVEESEVNHTTAPIDARLQTFLNSYFAECGEEVPKIPDDTFILDREGLGRVLSFPPHKQEFFCETMKSYKIKQGVLHNPAKDKRTTVGVFHICQSDVPVPADKIECPKIAFLRMLKAAFYGAPDDHLIIPYTAECKEPTRSWVSLYMRPVVVPGVKGVKGFEHEKATEMHFFVPGNMVSCLDFVESVFGNAGNPRLSKNDAALDPLGWTGHSGMAILAPHLTRMTKKECGLPHISQATERQKRERMCWEKEDELYNDGKTFKMYCRDASGVICTIIADNYFGYCKKEVKTQISYSANLYGFAEEEHAGGAVTRPSYDLGEACKAVQYAEGYKFSEMVEKNKHSIIVKEEGYAVDKKYPEGIIYVPEDSVFTIEDASIKFNHNGKEESILLTPKVNYVLPNGYTIILHDTMTSRRWTLRGILPQYTLCHKPCTVSGGGKSEISKSIRDAVIEGSVFVNNKEEDFKAVQEIFDHDFSKRYANGEVKPIHILDPNVTLGTVVELLTPSHLFTKEHNDYISSISPLIVELVMTIKSLYREDWKGDWQSRITVDKINGNEGNELKYRGANLCSQYLRVGFERDETTWRVFQLRKDFFPAAKLQMEDDITASVIVPTKLLKTPINNMQKKACKIVKNCELRLFQRPDDAVFRGFDKQTEYDFSIPGHFISNYQPMTREEAKDFTKDVVRLYQYTEPMRKCLQDFVAGKDEAKYIVSSSYTRLVPEGDKLVGSKNPRYLQRRPDMLDPEYTYMTFKAIQLYRKISDEEPLYTPVDAVLSGRRNNPPQVAKNGMKLRPLSVFAPLHYFELPELLMECITSMTGASPSMFGAGSEGALTKGPFNSLPAVVDLNNYLLGMICCGYSGFVSSASYCGPHYKVAHDISLLIPEIWSKMRRYEQEPKYLIEHGYLEPCPDVTYNGKTYSGKRLGYRITTAFANHFLRTLFSMPNSVMPEDFLKPELQDLAIYADSYEYMSQTDKGIAMNYVKDGTVEGACPPLKALIYIMANGEYNGMTRESKEFREMFDPEVVLNSEWYKERLVTRQKLEVAKLNKDLAYLNKTIAEKPRLVETLNKQIAAVKEELQYVSSEEYLIDIDGSIGTDPYPYKCMKH</sequence>
<protein>
    <recommendedName>
        <fullName evidence="3">PPi-type phosphoenolpyruvate carboxykinase 2</fullName>
        <shortName evidence="3">EhPEPCK2</shortName>
        <shortName evidence="3">PPi-PEPCK2</shortName>
        <ecNumber evidence="2">4.1.1.38</ecNumber>
    </recommendedName>
    <alternativeName>
        <fullName evidence="4">Diphosphate-dependent phosphoenolpyruvate carboxykinase 2</fullName>
    </alternativeName>
    <alternativeName>
        <fullName evidence="4">PEP carboxyphosphotransferase 2</fullName>
    </alternativeName>
</protein>
<gene>
    <name evidence="4" type="primary">PEPCK2</name>
    <name evidence="5" type="ORF">EHI_030750</name>
</gene>
<reference key="1">
    <citation type="journal article" date="2005" name="Nature">
        <title>The genome of the protist parasite Entamoeba histolytica.</title>
        <authorList>
            <person name="Loftus B.J."/>
            <person name="Anderson I."/>
            <person name="Davies R."/>
            <person name="Alsmark U.C."/>
            <person name="Samuelson J."/>
            <person name="Amedeo P."/>
            <person name="Roncaglia P."/>
            <person name="Berriman M."/>
            <person name="Hirt R.P."/>
            <person name="Mann B.J."/>
            <person name="Nozaki T."/>
            <person name="Suh B."/>
            <person name="Pop M."/>
            <person name="Duchene M."/>
            <person name="Ackers J."/>
            <person name="Tannich E."/>
            <person name="Leippe M."/>
            <person name="Hofer M."/>
            <person name="Bruchhaus I."/>
            <person name="Willhoeft U."/>
            <person name="Bhattacharya A."/>
            <person name="Chillingworth T."/>
            <person name="Churcher C.M."/>
            <person name="Hance Z."/>
            <person name="Harris B."/>
            <person name="Harris D."/>
            <person name="Jagels K."/>
            <person name="Moule S."/>
            <person name="Mungall K.L."/>
            <person name="Ormond D."/>
            <person name="Squares R."/>
            <person name="Whitehead S."/>
            <person name="Quail M.A."/>
            <person name="Rabbinowitsch E."/>
            <person name="Norbertczak H."/>
            <person name="Price C."/>
            <person name="Wang Z."/>
            <person name="Guillen N."/>
            <person name="Gilchrist C."/>
            <person name="Stroup S.E."/>
            <person name="Bhattacharya S."/>
            <person name="Lohia A."/>
            <person name="Foster P.G."/>
            <person name="Sicheritz-Ponten T."/>
            <person name="Weber C."/>
            <person name="Singh U."/>
            <person name="Mukherjee C."/>
            <person name="El-Sayed N.M.A."/>
            <person name="Petri W.A."/>
            <person name="Clark C.G."/>
            <person name="Embley T.M."/>
            <person name="Barrell B.G."/>
            <person name="Fraser C.M."/>
            <person name="Hall N."/>
        </authorList>
    </citation>
    <scope>NUCLEOTIDE SEQUENCE [LARGE SCALE GENOMIC DNA]</scope>
    <source>
        <strain>ATCC 30459 / HM-1:IMSS / ABRM</strain>
    </source>
</reference>
<reference key="2">
    <citation type="journal article" date="2010" name="PLoS Negl. Trop. Dis.">
        <title>New assembly, reannotation and analysis of the Entamoeba histolytica genome reveal new genomic features and protein content information.</title>
        <authorList>
            <person name="Lorenzi H.A."/>
            <person name="Puiu D."/>
            <person name="Miller J.R."/>
            <person name="Brinkac L.M."/>
            <person name="Amedeo P."/>
            <person name="Hall N."/>
            <person name="Caler E.V."/>
        </authorList>
    </citation>
    <scope>GENOME REANNOTATION</scope>
    <source>
        <strain>ATCC 30459 / HM-1:IMSS / ABRM</strain>
    </source>
</reference>
<reference key="3">
    <citation type="journal article" date="2015" name="J. Biol. Chem.">
        <title>Discovery of PPi-type phosphoenolpyruvate carboxykinase genes in eukaryotes and bacteria.</title>
        <authorList>
            <person name="Chiba Y."/>
            <person name="Kamikawa R."/>
            <person name="Nakada-Tsukui K."/>
            <person name="Saito-Nakano Y."/>
            <person name="Nozaki T."/>
        </authorList>
    </citation>
    <scope>IDENTIFICATION BY MASS SPECTROMETRY</scope>
    <scope>FUNCTION</scope>
    <scope>CATALYTIC ACTIVITY</scope>
    <scope>SUBCELLULAR LOCATION</scope>
    <scope>SUBUNIT</scope>
</reference>